<dbReference type="EC" id="4.2.3.101" evidence="5 6"/>
<dbReference type="EC" id="4.2.3.81" evidence="5 6"/>
<dbReference type="EC" id="4.2.3.55" evidence="5 6"/>
<dbReference type="EC" id="4.2.3.-" evidence="5 6"/>
<dbReference type="EC" id="4.2.3.47" evidence="5 6"/>
<dbReference type="EC" id="4.2.3.94" evidence="5 6"/>
<dbReference type="EMBL" id="AY518310">
    <property type="protein sequence ID" value="AAS88571.1"/>
    <property type="molecule type" value="mRNA"/>
</dbReference>
<dbReference type="EMBL" id="CM000786">
    <property type="protein sequence ID" value="AQK41278.1"/>
    <property type="molecule type" value="Genomic_DNA"/>
</dbReference>
<dbReference type="RefSeq" id="NP_001292867.2">
    <property type="nucleotide sequence ID" value="NM_001305938.2"/>
</dbReference>
<dbReference type="SMR" id="Q6JD73"/>
<dbReference type="PaxDb" id="4577-GRMZM2G117319_P01"/>
<dbReference type="GeneID" id="542754"/>
<dbReference type="KEGG" id="zma:542754"/>
<dbReference type="MaizeGDB" id="1219892"/>
<dbReference type="eggNOG" id="ENOG502QUCN">
    <property type="taxonomic scope" value="Eukaryota"/>
</dbReference>
<dbReference type="HOGENOM" id="CLU_003125_7_2_1"/>
<dbReference type="InParanoid" id="Q6JD73"/>
<dbReference type="OMA" id="CIAPTEQ"/>
<dbReference type="OrthoDB" id="1877784at2759"/>
<dbReference type="UniPathway" id="UPA00213"/>
<dbReference type="Proteomes" id="UP000007305">
    <property type="component" value="Unplaced"/>
</dbReference>
<dbReference type="ExpressionAtlas" id="Q6JD73">
    <property type="expression patterns" value="baseline"/>
</dbReference>
<dbReference type="GO" id="GO:0005737">
    <property type="term" value="C:cytoplasm"/>
    <property type="evidence" value="ECO:0007669"/>
    <property type="project" value="UniProtKB-SubCell"/>
</dbReference>
<dbReference type="GO" id="GO:0102064">
    <property type="term" value="F:gamma-curcumene synthase activity"/>
    <property type="evidence" value="ECO:0007669"/>
    <property type="project" value="UniProtKB-EC"/>
</dbReference>
<dbReference type="GO" id="GO:0000287">
    <property type="term" value="F:magnesium ion binding"/>
    <property type="evidence" value="ECO:0007669"/>
    <property type="project" value="InterPro"/>
</dbReference>
<dbReference type="GO" id="GO:0010333">
    <property type="term" value="F:terpene synthase activity"/>
    <property type="evidence" value="ECO:0007669"/>
    <property type="project" value="InterPro"/>
</dbReference>
<dbReference type="GO" id="GO:0006952">
    <property type="term" value="P:defense response"/>
    <property type="evidence" value="ECO:0007669"/>
    <property type="project" value="UniProtKB-KW"/>
</dbReference>
<dbReference type="GO" id="GO:0016102">
    <property type="term" value="P:diterpenoid biosynthetic process"/>
    <property type="evidence" value="ECO:0007669"/>
    <property type="project" value="InterPro"/>
</dbReference>
<dbReference type="CDD" id="cd00684">
    <property type="entry name" value="Terpene_cyclase_plant_C1"/>
    <property type="match status" value="1"/>
</dbReference>
<dbReference type="FunFam" id="1.10.600.10:FF:000007">
    <property type="entry name" value="Isoprene synthase, chloroplastic"/>
    <property type="match status" value="1"/>
</dbReference>
<dbReference type="Gene3D" id="1.10.600.10">
    <property type="entry name" value="Farnesyl Diphosphate Synthase"/>
    <property type="match status" value="1"/>
</dbReference>
<dbReference type="Gene3D" id="1.50.10.130">
    <property type="entry name" value="Terpene synthase, N-terminal domain"/>
    <property type="match status" value="1"/>
</dbReference>
<dbReference type="InterPro" id="IPR008949">
    <property type="entry name" value="Isoprenoid_synthase_dom_sf"/>
</dbReference>
<dbReference type="InterPro" id="IPR034741">
    <property type="entry name" value="Terpene_cyclase-like_1_C"/>
</dbReference>
<dbReference type="InterPro" id="IPR044814">
    <property type="entry name" value="Terpene_cyclase_plant_C1"/>
</dbReference>
<dbReference type="InterPro" id="IPR001906">
    <property type="entry name" value="Terpene_synth_N"/>
</dbReference>
<dbReference type="InterPro" id="IPR036965">
    <property type="entry name" value="Terpene_synth_N_sf"/>
</dbReference>
<dbReference type="InterPro" id="IPR050148">
    <property type="entry name" value="Terpene_synthase-like"/>
</dbReference>
<dbReference type="InterPro" id="IPR005630">
    <property type="entry name" value="Terpene_synthase_metal-bd"/>
</dbReference>
<dbReference type="InterPro" id="IPR008930">
    <property type="entry name" value="Terpenoid_cyclase/PrenylTrfase"/>
</dbReference>
<dbReference type="PANTHER" id="PTHR31225:SF168">
    <property type="entry name" value="INACTIVE SESQUITHUJENE SYNTHASE"/>
    <property type="match status" value="1"/>
</dbReference>
<dbReference type="PANTHER" id="PTHR31225">
    <property type="entry name" value="OS04G0344100 PROTEIN-RELATED"/>
    <property type="match status" value="1"/>
</dbReference>
<dbReference type="Pfam" id="PF01397">
    <property type="entry name" value="Terpene_synth"/>
    <property type="match status" value="1"/>
</dbReference>
<dbReference type="Pfam" id="PF03936">
    <property type="entry name" value="Terpene_synth_C"/>
    <property type="match status" value="1"/>
</dbReference>
<dbReference type="SFLD" id="SFLDS00005">
    <property type="entry name" value="Isoprenoid_Synthase_Type_I"/>
    <property type="match status" value="1"/>
</dbReference>
<dbReference type="SFLD" id="SFLDG01019">
    <property type="entry name" value="Terpene_Cyclase_Like_1_C_Termi"/>
    <property type="match status" value="1"/>
</dbReference>
<dbReference type="SUPFAM" id="SSF48239">
    <property type="entry name" value="Terpenoid cyclases/Protein prenyltransferases"/>
    <property type="match status" value="1"/>
</dbReference>
<dbReference type="SUPFAM" id="SSF48576">
    <property type="entry name" value="Terpenoid synthases"/>
    <property type="match status" value="1"/>
</dbReference>
<proteinExistence type="evidence at protein level"/>
<keyword id="KW-0963">Cytoplasm</keyword>
<keyword id="KW-0456">Lyase</keyword>
<keyword id="KW-0460">Magnesium</keyword>
<keyword id="KW-0464">Manganese</keyword>
<keyword id="KW-0479">Metal-binding</keyword>
<keyword id="KW-0611">Plant defense</keyword>
<keyword id="KW-1185">Reference proteome</keyword>
<feature type="chain" id="PRO_0000418849" description="7-epi-sesquithujene synthase">
    <location>
        <begin position="1"/>
        <end position="554"/>
    </location>
</feature>
<feature type="short sequence motif" description="DDXXD motif" evidence="1">
    <location>
        <begin position="308"/>
        <end position="312"/>
    </location>
</feature>
<feature type="binding site" evidence="2">
    <location>
        <position position="308"/>
    </location>
    <ligand>
        <name>Mg(2+)</name>
        <dbReference type="ChEBI" id="CHEBI:18420"/>
        <label>1</label>
    </ligand>
</feature>
<feature type="binding site" evidence="2">
    <location>
        <position position="308"/>
    </location>
    <ligand>
        <name>Mg(2+)</name>
        <dbReference type="ChEBI" id="CHEBI:18420"/>
        <label>2</label>
    </ligand>
</feature>
<feature type="binding site" evidence="1">
    <location>
        <position position="308"/>
    </location>
    <ligand>
        <name>substrate</name>
    </ligand>
</feature>
<feature type="binding site" evidence="2">
    <location>
        <position position="312"/>
    </location>
    <ligand>
        <name>Mg(2+)</name>
        <dbReference type="ChEBI" id="CHEBI:18420"/>
        <label>1</label>
    </ligand>
</feature>
<feature type="binding site" evidence="2">
    <location>
        <position position="312"/>
    </location>
    <ligand>
        <name>Mg(2+)</name>
        <dbReference type="ChEBI" id="CHEBI:18420"/>
        <label>2</label>
    </ligand>
</feature>
<feature type="binding site" evidence="1">
    <location>
        <position position="312"/>
    </location>
    <ligand>
        <name>substrate</name>
    </ligand>
</feature>
<feature type="binding site" evidence="1">
    <location>
        <position position="449"/>
    </location>
    <ligand>
        <name>substrate</name>
    </ligand>
</feature>
<feature type="binding site" evidence="2">
    <location>
        <position position="452"/>
    </location>
    <ligand>
        <name>Mg(2+)</name>
        <dbReference type="ChEBI" id="CHEBI:18420"/>
        <label>3</label>
    </ligand>
</feature>
<feature type="binding site" evidence="1">
    <location>
        <position position="452"/>
    </location>
    <ligand>
        <name>substrate</name>
    </ligand>
</feature>
<feature type="binding site" evidence="2">
    <location>
        <position position="456"/>
    </location>
    <ligand>
        <name>Mg(2+)</name>
        <dbReference type="ChEBI" id="CHEBI:18420"/>
        <label>3</label>
    </ligand>
</feature>
<feature type="binding site" evidence="2">
    <location>
        <position position="460"/>
    </location>
    <ligand>
        <name>Mg(2+)</name>
        <dbReference type="ChEBI" id="CHEBI:18420"/>
        <label>3</label>
    </ligand>
</feature>
<feature type="sequence conflict" description="In Ref. 1; AAS88571." ref="1">
    <original>H</original>
    <variation>P</variation>
    <location>
        <position position="4"/>
    </location>
</feature>
<evidence type="ECO:0000250" key="1">
    <source>
        <dbReference type="UniProtKB" id="A0A1C9J6A7"/>
    </source>
</evidence>
<evidence type="ECO:0000250" key="2">
    <source>
        <dbReference type="UniProtKB" id="Q40577"/>
    </source>
</evidence>
<evidence type="ECO:0000250" key="3">
    <source>
        <dbReference type="UniProtKB" id="Q5GJ60"/>
    </source>
</evidence>
<evidence type="ECO:0000250" key="4">
    <source>
        <dbReference type="UniProtKB" id="Q6Q3H2"/>
    </source>
</evidence>
<evidence type="ECO:0000269" key="5">
    <source>
    </source>
</evidence>
<evidence type="ECO:0000269" key="6">
    <source>
    </source>
</evidence>
<evidence type="ECO:0000303" key="7">
    <source>
    </source>
</evidence>
<evidence type="ECO:0000305" key="8"/>
<evidence type="ECO:0000305" key="9">
    <source>
    </source>
</evidence>
<evidence type="ECO:0000305" key="10">
    <source>
    </source>
</evidence>
<evidence type="ECO:0000312" key="11">
    <source>
        <dbReference type="EMBL" id="AQK41278.1"/>
    </source>
</evidence>
<accession>Q6JD73</accession>
<accession>K7TQK8</accession>
<sequence length="554" mass="63919">MASHPAHRSSKAADEELPKASSTFHPSLWGSFFLTYQPPTAPQRANMKERAEVLRERVRKVLKGSTTDQLPETVNLILTLQRLGLGYYYENEIDKLLHQIYSNSDYNVKDLNLVSQRFYLLRKNGYDVPSDVFLSFKTEEGGFACAAADTRSLLSLYNAAYLRKHGEEVLDEAISSTRLRLQDLLGRLLPESPFAKEVSSSLRTPLFRRVGILEARNYIPIYETEATRNEAVLELAKLNFNLQQLDFCEELKHCSAWWNEMIAKSKLTFVRDRIVEEYFWMNGACYDPPYSLSRIILTKITGLITIIDDMFDTHGTTEDCMKFAEAFGRWDESAIHLLPEYMKDFYILMLETFQSFEDALGPEKSYRVLYLKQAMERLVELYSKEIKWRDDDYVPTMSEHLQVSAETIATIALTCSAYAGMGDMSIRKETFEWALSFPQFIRTFGSFVRLSNDVVSTKREQTKDHSPSTVHCYMKEHGTTMDDACEKIKELIEDSWKDMLEQSLALKGLPKVVPQLVFDFSRTTDNMYRDRDALTSSEALKEMIQLLFVEPIPE</sequence>
<protein>
    <recommendedName>
        <fullName evidence="7">7-epi-sesquithujene synthase</fullName>
        <ecNumber evidence="5 6">4.2.3.101</ecNumber>
    </recommendedName>
    <alternativeName>
        <fullName evidence="7">(E)-alpha-bergamotene synthase</fullName>
        <ecNumber evidence="5 6">4.2.3.81</ecNumber>
    </alternativeName>
    <alternativeName>
        <fullName evidence="7">Beta-bisabolene synthase</fullName>
        <ecNumber evidence="5 6">4.2.3.55</ecNumber>
    </alternativeName>
    <alternativeName>
        <fullName evidence="7">Beta-curcumene synthase</fullName>
        <ecNumber evidence="5 6">4.2.3.-</ecNumber>
    </alternativeName>
    <alternativeName>
        <fullName evidence="7">Beta-farnesene synthase</fullName>
        <ecNumber evidence="5 6">4.2.3.47</ecNumber>
    </alternativeName>
    <alternativeName>
        <fullName evidence="7">Gamma-curcumene synthase</fullName>
        <ecNumber evidence="5 6">4.2.3.94</ecNumber>
    </alternativeName>
    <alternativeName>
        <fullName evidence="7">Sesquisabinene A synthase</fullName>
        <ecNumber evidence="5 6">4.2.3.-</ecNumber>
    </alternativeName>
    <alternativeName>
        <fullName evidence="7">Terpene synthase 4</fullName>
        <shortName evidence="7">tps4-B73</shortName>
    </alternativeName>
</protein>
<organism>
    <name type="scientific">Zea mays</name>
    <name type="common">Maize</name>
    <dbReference type="NCBI Taxonomy" id="4577"/>
    <lineage>
        <taxon>Eukaryota</taxon>
        <taxon>Viridiplantae</taxon>
        <taxon>Streptophyta</taxon>
        <taxon>Embryophyta</taxon>
        <taxon>Tracheophyta</taxon>
        <taxon>Spermatophyta</taxon>
        <taxon>Magnoliopsida</taxon>
        <taxon>Liliopsida</taxon>
        <taxon>Poales</taxon>
        <taxon>Poaceae</taxon>
        <taxon>PACMAD clade</taxon>
        <taxon>Panicoideae</taxon>
        <taxon>Andropogonodae</taxon>
        <taxon>Andropogoneae</taxon>
        <taxon>Tripsacinae</taxon>
        <taxon>Zea</taxon>
    </lineage>
</organism>
<name>TPS4A_MAIZE</name>
<gene>
    <name evidence="7" type="primary">TPS4</name>
    <name evidence="11" type="ORF">ZEAMMB73_Zm00001d024478</name>
</gene>
<comment type="function">
    <text evidence="5 6">Sesquiterpene synthase involved in the production after herbivore attack of a blend of volatiles that attracts natural enemies of herbivores. Converts farnesyl diphosphate to (S)-beta-bisabolene and 7-epi-sesquithujene, along with a mixture of more than 20 other minor sesquiterpene olefins. Can also act in vitro as a monoterpene synthase, converting geranyl diphosphate to (S)-(-)-limonene, beta-myrcene and 11 other monoterpenes.</text>
</comment>
<comment type="catalytic activity">
    <reaction evidence="5 6">
        <text>(2E,6E)-farnesyl diphosphate = 7-epi-sesquithujene + diphosphate</text>
        <dbReference type="Rhea" id="RHEA:31995"/>
        <dbReference type="ChEBI" id="CHEBI:33019"/>
        <dbReference type="ChEBI" id="CHEBI:63710"/>
        <dbReference type="ChEBI" id="CHEBI:175763"/>
        <dbReference type="EC" id="4.2.3.101"/>
    </reaction>
    <physiologicalReaction direction="left-to-right" evidence="5 6">
        <dbReference type="Rhea" id="RHEA:31996"/>
    </physiologicalReaction>
</comment>
<comment type="catalytic activity">
    <reaction evidence="5 6">
        <text>(2E,6E)-farnesyl diphosphate = (1S,5S,6R)-alpha-bergamotene + diphosphate</text>
        <dbReference type="Rhea" id="RHEA:31427"/>
        <dbReference type="ChEBI" id="CHEBI:33019"/>
        <dbReference type="ChEBI" id="CHEBI:62756"/>
        <dbReference type="ChEBI" id="CHEBI:175763"/>
        <dbReference type="EC" id="4.2.3.81"/>
    </reaction>
    <physiologicalReaction direction="left-to-right" evidence="5 6">
        <dbReference type="Rhea" id="RHEA:31428"/>
    </physiologicalReaction>
</comment>
<comment type="catalytic activity">
    <reaction evidence="5 6">
        <text>(2E,6E)-farnesyl diphosphate = (E)-beta-farnesene + diphosphate</text>
        <dbReference type="Rhea" id="RHEA:27425"/>
        <dbReference type="ChEBI" id="CHEBI:10418"/>
        <dbReference type="ChEBI" id="CHEBI:33019"/>
        <dbReference type="ChEBI" id="CHEBI:175763"/>
        <dbReference type="EC" id="4.2.3.47"/>
    </reaction>
    <physiologicalReaction direction="left-to-right" evidence="5 6">
        <dbReference type="Rhea" id="RHEA:27426"/>
    </physiologicalReaction>
</comment>
<comment type="catalytic activity">
    <reaction evidence="5 6">
        <text>(2E,6E)-farnesyl diphosphate = (S)-beta-bisabolene + diphosphate</text>
        <dbReference type="Rhea" id="RHEA:28266"/>
        <dbReference type="ChEBI" id="CHEBI:33019"/>
        <dbReference type="ChEBI" id="CHEBI:49263"/>
        <dbReference type="ChEBI" id="CHEBI:175763"/>
        <dbReference type="EC" id="4.2.3.55"/>
    </reaction>
    <physiologicalReaction direction="left-to-right" evidence="5 6">
        <dbReference type="Rhea" id="RHEA:28267"/>
    </physiologicalReaction>
</comment>
<comment type="catalytic activity">
    <reaction evidence="5 6">
        <text>(2Z,6E)-farnesyl diphosphate = (-)-beta-curcumene + diphosphate</text>
        <dbReference type="Rhea" id="RHEA:31419"/>
        <dbReference type="ChEBI" id="CHEBI:33019"/>
        <dbReference type="ChEBI" id="CHEBI:62760"/>
        <dbReference type="ChEBI" id="CHEBI:162247"/>
    </reaction>
    <physiologicalReaction direction="left-to-right" evidence="5 6">
        <dbReference type="Rhea" id="RHEA:31420"/>
    </physiologicalReaction>
</comment>
<comment type="catalytic activity">
    <reaction evidence="5 6">
        <text>(2E,6E)-farnesyl diphosphate = gamma-curcumene + diphosphate</text>
        <dbReference type="Rhea" id="RHEA:32031"/>
        <dbReference type="ChEBI" id="CHEBI:33019"/>
        <dbReference type="ChEBI" id="CHEBI:63696"/>
        <dbReference type="ChEBI" id="CHEBI:175763"/>
        <dbReference type="EC" id="4.2.3.94"/>
    </reaction>
    <physiologicalReaction direction="left-to-right" evidence="5 6">
        <dbReference type="Rhea" id="RHEA:32032"/>
    </physiologicalReaction>
</comment>
<comment type="catalytic activity">
    <reaction evidence="5 6">
        <text>(2E,6E)-farnesyl diphosphate = sesquisabinene A + diphosphate</text>
        <dbReference type="Rhea" id="RHEA:60020"/>
        <dbReference type="ChEBI" id="CHEBI:33019"/>
        <dbReference type="ChEBI" id="CHEBI:143551"/>
        <dbReference type="ChEBI" id="CHEBI:175763"/>
    </reaction>
    <physiologicalReaction direction="left-to-right" evidence="5 6">
        <dbReference type="Rhea" id="RHEA:60021"/>
    </physiologicalReaction>
</comment>
<comment type="cofactor">
    <cofactor evidence="5">
        <name>Mg(2+)</name>
        <dbReference type="ChEBI" id="CHEBI:18420"/>
    </cofactor>
    <cofactor evidence="5">
        <name>Mn(2+)</name>
        <dbReference type="ChEBI" id="CHEBI:29035"/>
    </cofactor>
    <text evidence="3">Binds 3 Mg(2+) or Mn(2+) ions per subunit.</text>
</comment>
<comment type="biophysicochemical properties">
    <kinetics>
        <KM evidence="5">1.1 uM for farnesyl diphosphate (in the presence of 10 mM magnesium and 1 mM manganese)</KM>
        <KM evidence="5">0.9 uM for geranyl diphosphate (in the presence of 10 mM magnesium and 1 mM manganese)</KM>
        <KM evidence="5">170 uM for magnesium (in the presence of 10 uM farnesyl diphosphate)</KM>
        <KM evidence="5">0.5 uM for manganese (in the presence of 10 uM farnesyl diphosphate)</KM>
        <text>Increased production of (E)-beta-farnesene the presence of manganese.</text>
    </kinetics>
    <phDependence>
        <text evidence="5">Optimum pH is 7.0.</text>
    </phDependence>
</comment>
<comment type="pathway">
    <text evidence="10">Secondary metabolite biosynthesis; terpenoid biosynthesis.</text>
</comment>
<comment type="subunit">
    <text evidence="5">Monomer.</text>
</comment>
<comment type="subcellular location">
    <subcellularLocation>
        <location evidence="4">Cytoplasm</location>
    </subcellularLocation>
</comment>
<comment type="tissue specificity">
    <text evidence="5">Highly expressed in the husk. Detected in leaf sheaths and leaves.</text>
</comment>
<comment type="induction">
    <text evidence="5">Up-regulated in leaf sheaths after herbivore damage.</text>
</comment>
<comment type="domain">
    <text evidence="1">The Asp-Asp-Xaa-Xaa-Asp/Glu (DDXXD/E) motif is important for the catalytic activity, presumably through binding to Mg(2+).</text>
</comment>
<comment type="miscellaneous">
    <text evidence="9">The allele found in cv. B73 encodes an active enzyme while the allele found in cv. Delprim contains a frame shift mutation (PubMed:15075399).</text>
</comment>
<comment type="similarity">
    <text evidence="8">Belongs to the terpene synthase family.</text>
</comment>
<reference key="1">
    <citation type="journal article" date="2004" name="Plant Cell">
        <title>The variability of sesquiterpenes emitted from two Zea mays cultivars is controlled by allelic variation of two terpene synthase genes encoding stereoselective multiple product enzymes.</title>
        <authorList>
            <person name="Koellner T.G."/>
            <person name="Schnee C."/>
            <person name="Gershenzon J."/>
            <person name="Degenhardt J."/>
        </authorList>
    </citation>
    <scope>NUCLEOTIDE SEQUENCE [MRNA]</scope>
    <scope>FUNCTION</scope>
    <scope>CATALYTIC ACTIVITY</scope>
    <scope>COFACTOR</scope>
    <scope>BIOPHYSICOCHEMICAL PROPERTIES</scope>
    <scope>SUBUNIT</scope>
    <scope>3D-STRUCTURE MODELING</scope>
    <scope>TISSUE SPECIFICITY</scope>
    <scope>INDUCTION</scope>
    <source>
        <strain>cv. B73</strain>
    </source>
</reference>
<reference key="2">
    <citation type="journal article" date="2009" name="Science">
        <title>The B73 maize genome: complexity, diversity, and dynamics.</title>
        <authorList>
            <person name="Schnable P.S."/>
            <person name="Ware D."/>
            <person name="Fulton R.S."/>
            <person name="Stein J.C."/>
            <person name="Wei F."/>
            <person name="Pasternak S."/>
            <person name="Liang C."/>
            <person name="Zhang J."/>
            <person name="Fulton L."/>
            <person name="Graves T.A."/>
            <person name="Minx P."/>
            <person name="Reily A.D."/>
            <person name="Courtney L."/>
            <person name="Kruchowski S.S."/>
            <person name="Tomlinson C."/>
            <person name="Strong C."/>
            <person name="Delehaunty K."/>
            <person name="Fronick C."/>
            <person name="Courtney B."/>
            <person name="Rock S.M."/>
            <person name="Belter E."/>
            <person name="Du F."/>
            <person name="Kim K."/>
            <person name="Abbott R.M."/>
            <person name="Cotton M."/>
            <person name="Levy A."/>
            <person name="Marchetto P."/>
            <person name="Ochoa K."/>
            <person name="Jackson S.M."/>
            <person name="Gillam B."/>
            <person name="Chen W."/>
            <person name="Yan L."/>
            <person name="Higginbotham J."/>
            <person name="Cardenas M."/>
            <person name="Waligorski J."/>
            <person name="Applebaum E."/>
            <person name="Phelps L."/>
            <person name="Falcone J."/>
            <person name="Kanchi K."/>
            <person name="Thane T."/>
            <person name="Scimone A."/>
            <person name="Thane N."/>
            <person name="Henke J."/>
            <person name="Wang T."/>
            <person name="Ruppert J."/>
            <person name="Shah N."/>
            <person name="Rotter K."/>
            <person name="Hodges J."/>
            <person name="Ingenthron E."/>
            <person name="Cordes M."/>
            <person name="Kohlberg S."/>
            <person name="Sgro J."/>
            <person name="Delgado B."/>
            <person name="Mead K."/>
            <person name="Chinwalla A."/>
            <person name="Leonard S."/>
            <person name="Crouse K."/>
            <person name="Collura K."/>
            <person name="Kudrna D."/>
            <person name="Currie J."/>
            <person name="He R."/>
            <person name="Angelova A."/>
            <person name="Rajasekar S."/>
            <person name="Mueller T."/>
            <person name="Lomeli R."/>
            <person name="Scara G."/>
            <person name="Ko A."/>
            <person name="Delaney K."/>
            <person name="Wissotski M."/>
            <person name="Lopez G."/>
            <person name="Campos D."/>
            <person name="Braidotti M."/>
            <person name="Ashley E."/>
            <person name="Golser W."/>
            <person name="Kim H."/>
            <person name="Lee S."/>
            <person name="Lin J."/>
            <person name="Dujmic Z."/>
            <person name="Kim W."/>
            <person name="Talag J."/>
            <person name="Zuccolo A."/>
            <person name="Fan C."/>
            <person name="Sebastian A."/>
            <person name="Kramer M."/>
            <person name="Spiegel L."/>
            <person name="Nascimento L."/>
            <person name="Zutavern T."/>
            <person name="Miller B."/>
            <person name="Ambroise C."/>
            <person name="Muller S."/>
            <person name="Spooner W."/>
            <person name="Narechania A."/>
            <person name="Ren L."/>
            <person name="Wei S."/>
            <person name="Kumari S."/>
            <person name="Faga B."/>
            <person name="Levy M.J."/>
            <person name="McMahan L."/>
            <person name="Van Buren P."/>
            <person name="Vaughn M.W."/>
            <person name="Ying K."/>
            <person name="Yeh C.-T."/>
            <person name="Emrich S.J."/>
            <person name="Jia Y."/>
            <person name="Kalyanaraman A."/>
            <person name="Hsia A.-P."/>
            <person name="Barbazuk W.B."/>
            <person name="Baucom R.S."/>
            <person name="Brutnell T.P."/>
            <person name="Carpita N.C."/>
            <person name="Chaparro C."/>
            <person name="Chia J.-M."/>
            <person name="Deragon J.-M."/>
            <person name="Estill J.C."/>
            <person name="Fu Y."/>
            <person name="Jeddeloh J.A."/>
            <person name="Han Y."/>
            <person name="Lee H."/>
            <person name="Li P."/>
            <person name="Lisch D.R."/>
            <person name="Liu S."/>
            <person name="Liu Z."/>
            <person name="Nagel D.H."/>
            <person name="McCann M.C."/>
            <person name="SanMiguel P."/>
            <person name="Myers A.M."/>
            <person name="Nettleton D."/>
            <person name="Nguyen J."/>
            <person name="Penning B.W."/>
            <person name="Ponnala L."/>
            <person name="Schneider K.L."/>
            <person name="Schwartz D.C."/>
            <person name="Sharma A."/>
            <person name="Soderlund C."/>
            <person name="Springer N.M."/>
            <person name="Sun Q."/>
            <person name="Wang H."/>
            <person name="Waterman M."/>
            <person name="Westerman R."/>
            <person name="Wolfgruber T.K."/>
            <person name="Yang L."/>
            <person name="Yu Y."/>
            <person name="Zhang L."/>
            <person name="Zhou S."/>
            <person name="Zhu Q."/>
            <person name="Bennetzen J.L."/>
            <person name="Dawe R.K."/>
            <person name="Jiang J."/>
            <person name="Jiang N."/>
            <person name="Presting G.G."/>
            <person name="Wessler S.R."/>
            <person name="Aluru S."/>
            <person name="Martienssen R.A."/>
            <person name="Clifton S.W."/>
            <person name="McCombie W.R."/>
            <person name="Wing R.A."/>
            <person name="Wilson R.K."/>
        </authorList>
    </citation>
    <scope>NUCLEOTIDE SEQUENCE [LARGE SCALE GENOMIC DNA]</scope>
    <source>
        <strain>cv. B73</strain>
    </source>
</reference>
<reference key="3">
    <citation type="journal article" date="2015" name="Org. Biomol. Chem.">
        <title>Substrate geometry controls the cyclization cascade in multiproduct terpene synthases from Zea mays.</title>
        <authorList>
            <person name="Vattekkatte A."/>
            <person name="Gatto N."/>
            <person name="Koellner T.G."/>
            <person name="Degenhardt J."/>
            <person name="Gershenzon J."/>
            <person name="Boland W."/>
        </authorList>
    </citation>
    <scope>FUNCTION</scope>
    <scope>CATALYTIC ACTIVITY</scope>
</reference>
<reference key="4">
    <citation type="journal article" date="2019" name="Planta">
        <title>Biosynthesis and function of terpenoid defense compounds in maize (Zea mays).</title>
        <authorList>
            <person name="Block A.K."/>
            <person name="Vaughan M.M."/>
            <person name="Schmelz E.A."/>
            <person name="Christensen S.A."/>
        </authorList>
    </citation>
    <scope>REVIEW</scope>
</reference>